<proteinExistence type="inferred from homology"/>
<organism>
    <name type="scientific">Human adenovirus F serotype 40</name>
    <name type="common">HAdV-40</name>
    <name type="synonym">Human adenovirus 40</name>
    <dbReference type="NCBI Taxonomy" id="28284"/>
    <lineage>
        <taxon>Viruses</taxon>
        <taxon>Varidnaviria</taxon>
        <taxon>Bamfordvirae</taxon>
        <taxon>Preplasmiviricota</taxon>
        <taxon>Tectiliviricetes</taxon>
        <taxon>Rowavirales</taxon>
        <taxon>Adenoviridae</taxon>
        <taxon>Mastadenovirus</taxon>
        <taxon>Human mastadenovirus F</taxon>
    </lineage>
</organism>
<evidence type="ECO:0000250" key="1">
    <source>
        <dbReference type="UniProtKB" id="P03261"/>
    </source>
</evidence>
<evidence type="ECO:0000250" key="2">
    <source>
        <dbReference type="UniProtKB" id="P04495"/>
    </source>
</evidence>
<evidence type="ECO:0000255" key="3">
    <source>
        <dbReference type="HAMAP-Rule" id="MF_04055"/>
    </source>
</evidence>
<evidence type="ECO:0000256" key="4">
    <source>
        <dbReference type="SAM" id="MobiDB-lite"/>
    </source>
</evidence>
<evidence type="ECO:0000305" key="5"/>
<dbReference type="EC" id="2.7.7.7" evidence="3"/>
<dbReference type="EMBL" id="L19443">
    <property type="protein sequence ID" value="AAC13953.1"/>
    <property type="molecule type" value="Genomic_DNA"/>
</dbReference>
<dbReference type="KEGG" id="vg:2715933"/>
<dbReference type="Proteomes" id="UP000151954">
    <property type="component" value="Segment"/>
</dbReference>
<dbReference type="GO" id="GO:0042025">
    <property type="term" value="C:host cell nucleus"/>
    <property type="evidence" value="ECO:0007669"/>
    <property type="project" value="UniProtKB-SubCell"/>
</dbReference>
<dbReference type="GO" id="GO:0008408">
    <property type="term" value="F:3'-5' exonuclease activity"/>
    <property type="evidence" value="ECO:0007669"/>
    <property type="project" value="UniProtKB-UniRule"/>
</dbReference>
<dbReference type="GO" id="GO:0003677">
    <property type="term" value="F:DNA binding"/>
    <property type="evidence" value="ECO:0007669"/>
    <property type="project" value="UniProtKB-UniRule"/>
</dbReference>
<dbReference type="GO" id="GO:0003887">
    <property type="term" value="F:DNA-directed DNA polymerase activity"/>
    <property type="evidence" value="ECO:0007669"/>
    <property type="project" value="UniProtKB-UniRule"/>
</dbReference>
<dbReference type="GO" id="GO:0000166">
    <property type="term" value="F:nucleotide binding"/>
    <property type="evidence" value="ECO:0007669"/>
    <property type="project" value="UniProtKB-UniRule"/>
</dbReference>
<dbReference type="GO" id="GO:0006261">
    <property type="term" value="P:DNA-templated DNA replication"/>
    <property type="evidence" value="ECO:0007669"/>
    <property type="project" value="UniProtKB-UniRule"/>
</dbReference>
<dbReference type="GO" id="GO:0039693">
    <property type="term" value="P:viral DNA genome replication"/>
    <property type="evidence" value="ECO:0007669"/>
    <property type="project" value="UniProtKB-UniRule"/>
</dbReference>
<dbReference type="Gene3D" id="1.10.287.690">
    <property type="entry name" value="Helix hairpin bin"/>
    <property type="match status" value="1"/>
</dbReference>
<dbReference type="Gene3D" id="3.90.1600.10">
    <property type="entry name" value="Palm domain of DNA polymerase"/>
    <property type="match status" value="1"/>
</dbReference>
<dbReference type="Gene3D" id="3.30.1770.10">
    <property type="entry name" value="TPR 1 domain of DNA polymerase"/>
    <property type="match status" value="1"/>
</dbReference>
<dbReference type="HAMAP" id="MF_04055">
    <property type="entry name" value="ADV_DPOL"/>
    <property type="match status" value="1"/>
</dbReference>
<dbReference type="InterPro" id="IPR006172">
    <property type="entry name" value="DNA-dir_DNA_pol_B"/>
</dbReference>
<dbReference type="InterPro" id="IPR014382">
    <property type="entry name" value="DNA-dir_DNA_pol_B_adenovir"/>
</dbReference>
<dbReference type="InterPro" id="IPR017964">
    <property type="entry name" value="DNA-dir_DNA_pol_B_CS"/>
</dbReference>
<dbReference type="InterPro" id="IPR004868">
    <property type="entry name" value="DNA-dir_DNA_pol_B_mt/vir"/>
</dbReference>
<dbReference type="InterPro" id="IPR043502">
    <property type="entry name" value="DNA/RNA_pol_sf"/>
</dbReference>
<dbReference type="InterPro" id="IPR023211">
    <property type="entry name" value="DNA_pol_palm_dom_sf"/>
</dbReference>
<dbReference type="InterPro" id="IPR012337">
    <property type="entry name" value="RNaseH-like_sf"/>
</dbReference>
<dbReference type="Pfam" id="PF03175">
    <property type="entry name" value="DNA_pol_B_2"/>
    <property type="match status" value="1"/>
</dbReference>
<dbReference type="PIRSF" id="PIRSF000788">
    <property type="entry name" value="DPol_ADV"/>
    <property type="match status" value="1"/>
</dbReference>
<dbReference type="PRINTS" id="PR00106">
    <property type="entry name" value="DNAPOLB"/>
</dbReference>
<dbReference type="SMART" id="SM00486">
    <property type="entry name" value="POLBc"/>
    <property type="match status" value="1"/>
</dbReference>
<dbReference type="SUPFAM" id="SSF56672">
    <property type="entry name" value="DNA/RNA polymerases"/>
    <property type="match status" value="1"/>
</dbReference>
<dbReference type="SUPFAM" id="SSF53098">
    <property type="entry name" value="Ribonuclease H-like"/>
    <property type="match status" value="1"/>
</dbReference>
<dbReference type="PROSITE" id="PS00116">
    <property type="entry name" value="DNA_POLYMERASE_B"/>
    <property type="match status" value="1"/>
</dbReference>
<name>DPOL_ADE40</name>
<reference key="1">
    <citation type="journal article" date="1993" name="J. Mol. Biol.">
        <title>The DNA sequence of adenovirus type 40.</title>
        <authorList>
            <person name="Davison A.J."/>
            <person name="Telford E.A."/>
            <person name="Watson M.S."/>
            <person name="McBride K."/>
            <person name="Mautner V."/>
        </authorList>
    </citation>
    <scope>NUCLEOTIDE SEQUENCE [LARGE SCALE GENOMIC DNA]</scope>
    <source>
        <strain>Dugan</strain>
    </source>
</reference>
<organismHost>
    <name type="scientific">Homo sapiens</name>
    <name type="common">Human</name>
    <dbReference type="NCBI Taxonomy" id="9606"/>
</organismHost>
<comment type="function">
    <text evidence="1 2 3">Eukaryotic-type DNA polymerase involved in viral genomic replication. DNA synthesis is protein primed, and acts in a strand displacement replication. Assembles in complex with viral pTP, DBP, host NFIA and host POU2F1/OCT1 on viral origin of replication. The polymerase covalently transfers dCMP onto pTP, thereby initiating complementary strand synthesis.</text>
</comment>
<comment type="catalytic activity">
    <reaction evidence="3">
        <text>DNA(n) + a 2'-deoxyribonucleoside 5'-triphosphate = DNA(n+1) + diphosphate</text>
        <dbReference type="Rhea" id="RHEA:22508"/>
        <dbReference type="Rhea" id="RHEA-COMP:17339"/>
        <dbReference type="Rhea" id="RHEA-COMP:17340"/>
        <dbReference type="ChEBI" id="CHEBI:33019"/>
        <dbReference type="ChEBI" id="CHEBI:61560"/>
        <dbReference type="ChEBI" id="CHEBI:173112"/>
        <dbReference type="EC" id="2.7.7.7"/>
    </reaction>
</comment>
<comment type="subunit">
    <text evidence="2 3">Heterodimer with the terminal protein; this heterodimer binds to bp 9 to 18 of the genome. Forms a complex with viral pTP, DBP and hosts NFIA and POU2F1/OCT1 for initiation of replication.</text>
</comment>
<comment type="subcellular location">
    <subcellularLocation>
        <location evidence="1 3">Host nucleus</location>
    </subcellularLocation>
</comment>
<comment type="miscellaneous">
    <text evidence="3">This DNA polymerase requires a protein as a primer.</text>
</comment>
<comment type="similarity">
    <text evidence="3 5">Belongs to the DNA polymerase type-B family.</text>
</comment>
<sequence>MALVPSPRAGGFLPAETHSGPQPPRRRVRQSTAGAAPTATRAPRRRAATASPGEPPSTTASGRPPAANNVSLTPNSRLRGTIVAPRGQGLLYAIDTATNSPMEIKFHRRLASALTRLLQVNLRSVPADLNEAFLDSLDSSQIRTLALKLKVPRVEVWTCGSRGVVVPSIIHPQQERAGAEEGDEGERQDTEDFLNFPLRFLVRGRQVHLIQEMQSVQRCEYCARFYKYQHECTVRRRDFYFHHINAHSSGWWQKINFFPIGSHPRVERLFVTYDVETYTWMGAFGKQLVPFMLVMHLSGEEALVKEACRLACELQWDTWGNDERTFYVVTPEKLAVGKKFREYRNRLQAHFALQLWRGFLAANPQLAEWACLEMGLFSPDYLTYEELQKAPKLQGRPRFLELYIVGHNINGFDEIVLAAQVINNRSDVPGPFKITRNFMPRAGKILFNDITFALPNPSSKKRTDYRLWEQGACDDSDFKYQFLKVMVRDTFALTHTSLRKAAQAYTLPVEKGCCPYKAVNEFYMLGSYRADERGFPAEDYWKDREEYLLNRELWEKKQCPHYDLVRETLDYCALDVLVTAALVQKLRESYAQFIRDAVGLPEASFNVFQRPTISSNSHAIFRQILYRTVKPQRSDLGGSLLAPSHEMYDYVRASIRGGRCYPTYIGVLREPLYVYDICGMYASALTHPMPWGFPLNPYERALAVRDWEHALLQVGTPIDYFNRTLLPGIFTIDADPPPENLLDVLPPLCSRKGGRLCWTNEPLRGEVVTSVDLITLHNRGWHVRLLPDERATVFPEWRCVAKEYVHLNITAKERADREKNQTLRSIAKLLSNALYGSFATKLDNKKIVFSDQMDSATIKSIAAGQINIKSTSFVETDTLSAEVMPTFQRAYSPEQLAVVHSDAEESDEEPGHAPFYTPTHKPNDHVTYTYKPITFMDAEEDDLCLHTLEKVDPLVENNRYPSQIASFVLAWTRAFVSEWSEILYAEDRGTPLEQRTLKSVYGDTDSLFVTEAGYRLMETRGKKRIKKHGGNLVFDPKHPELAWLVECETVCAQCGADAYSPESVFLAPKLYALKCLRCPSCQQISKGKLRAKGHAAETLNYDLMLKCYLADFQGEDARFHTSRMSLKRTLASAQPGARPFTVTETNLTRTLRPWKDITLAPLDAHRLVPYSQSRPNPRNQEVCWIEMP</sequence>
<accession>P48311</accession>
<keyword id="KW-0235">DNA replication</keyword>
<keyword id="KW-0238">DNA-binding</keyword>
<keyword id="KW-0239">DNA-directed DNA polymerase</keyword>
<keyword id="KW-1048">Host nucleus</keyword>
<keyword id="KW-0548">Nucleotidyltransferase</keyword>
<keyword id="KW-1185">Reference proteome</keyword>
<keyword id="KW-0808">Transferase</keyword>
<keyword id="KW-1194">Viral DNA replication</keyword>
<feature type="chain" id="PRO_0000046497" description="DNA polymerase">
    <location>
        <begin position="1"/>
        <end position="1188"/>
    </location>
</feature>
<feature type="region of interest" description="Disordered" evidence="4">
    <location>
        <begin position="1"/>
        <end position="74"/>
    </location>
</feature>
<feature type="compositionally biased region" description="Low complexity" evidence="4">
    <location>
        <begin position="31"/>
        <end position="41"/>
    </location>
</feature>
<gene>
    <name evidence="3" type="primary">POL</name>
</gene>
<protein>
    <recommendedName>
        <fullName evidence="3">DNA polymerase</fullName>
        <ecNumber evidence="3">2.7.7.7</ecNumber>
    </recommendedName>
</protein>